<gene>
    <name type="primary">trf3</name>
    <name type="ordered locus">Ta0815</name>
</gene>
<feature type="chain" id="PRO_0000095112" description="Tricorn protease-interacting factor F3">
    <location>
        <begin position="1"/>
        <end position="780"/>
    </location>
</feature>
<feature type="active site" description="Proton acceptor" evidence="3">
    <location>
        <position position="266"/>
    </location>
</feature>
<feature type="binding site" evidence="1">
    <location>
        <position position="101"/>
    </location>
    <ligand>
        <name>substrate</name>
    </ligand>
</feature>
<feature type="binding site" evidence="1">
    <location>
        <begin position="230"/>
        <end position="234"/>
    </location>
    <ligand>
        <name>substrate</name>
    </ligand>
</feature>
<feature type="binding site">
    <location>
        <position position="265"/>
    </location>
    <ligand>
        <name>Zn(2+)</name>
        <dbReference type="ChEBI" id="CHEBI:29105"/>
        <note>catalytic</note>
    </ligand>
</feature>
<feature type="binding site">
    <location>
        <position position="269"/>
    </location>
    <ligand>
        <name>Zn(2+)</name>
        <dbReference type="ChEBI" id="CHEBI:29105"/>
        <note>catalytic</note>
    </ligand>
</feature>
<feature type="binding site">
    <location>
        <position position="288"/>
    </location>
    <ligand>
        <name>Zn(2+)</name>
        <dbReference type="ChEBI" id="CHEBI:29105"/>
        <note>catalytic</note>
    </ligand>
</feature>
<feature type="site" description="Transition state stabilizer" evidence="1">
    <location>
        <position position="351"/>
    </location>
</feature>
<feature type="strand" evidence="5">
    <location>
        <begin position="3"/>
        <end position="13"/>
    </location>
</feature>
<feature type="turn" evidence="5">
    <location>
        <begin position="14"/>
        <end position="17"/>
    </location>
</feature>
<feature type="strand" evidence="5">
    <location>
        <begin position="18"/>
        <end position="27"/>
    </location>
</feature>
<feature type="strand" evidence="5">
    <location>
        <begin position="32"/>
        <end position="35"/>
    </location>
</feature>
<feature type="strand" evidence="5">
    <location>
        <begin position="40"/>
        <end position="46"/>
    </location>
</feature>
<feature type="strand" evidence="5">
    <location>
        <begin position="57"/>
        <end position="62"/>
    </location>
</feature>
<feature type="strand" evidence="5">
    <location>
        <begin position="66"/>
        <end position="78"/>
    </location>
</feature>
<feature type="strand" evidence="5">
    <location>
        <begin position="80"/>
        <end position="91"/>
    </location>
</feature>
<feature type="strand" evidence="5">
    <location>
        <begin position="95"/>
        <end position="99"/>
    </location>
</feature>
<feature type="turn" evidence="5">
    <location>
        <begin position="101"/>
        <end position="103"/>
    </location>
</feature>
<feature type="helix" evidence="5">
    <location>
        <begin position="105"/>
        <end position="107"/>
    </location>
</feature>
<feature type="strand" evidence="5">
    <location>
        <begin position="119"/>
        <end position="127"/>
    </location>
</feature>
<feature type="strand" evidence="5">
    <location>
        <begin position="132"/>
        <end position="137"/>
    </location>
</feature>
<feature type="strand" evidence="5">
    <location>
        <begin position="139"/>
        <end position="152"/>
    </location>
</feature>
<feature type="helix" evidence="5">
    <location>
        <begin position="160"/>
        <end position="162"/>
    </location>
</feature>
<feature type="strand" evidence="5">
    <location>
        <begin position="165"/>
        <end position="168"/>
    </location>
</feature>
<feature type="strand" evidence="5">
    <location>
        <begin position="171"/>
        <end position="177"/>
    </location>
</feature>
<feature type="strand" evidence="5">
    <location>
        <begin position="180"/>
        <end position="188"/>
    </location>
</feature>
<feature type="helix" evidence="5">
    <location>
        <begin position="194"/>
        <end position="210"/>
    </location>
</feature>
<feature type="strand" evidence="5">
    <location>
        <begin position="215"/>
        <end position="224"/>
    </location>
</feature>
<feature type="strand" evidence="5">
    <location>
        <begin position="237"/>
        <end position="241"/>
    </location>
</feature>
<feature type="helix" evidence="5">
    <location>
        <begin position="242"/>
        <end position="245"/>
    </location>
</feature>
<feature type="strand" evidence="6">
    <location>
        <begin position="249"/>
        <end position="251"/>
    </location>
</feature>
<feature type="helix" evidence="5">
    <location>
        <begin position="253"/>
        <end position="269"/>
    </location>
</feature>
<feature type="turn" evidence="5">
    <location>
        <begin position="273"/>
        <end position="275"/>
    </location>
</feature>
<feature type="strand" evidence="5">
    <location>
        <begin position="276"/>
        <end position="280"/>
    </location>
</feature>
<feature type="helix" evidence="5">
    <location>
        <begin position="281"/>
        <end position="283"/>
    </location>
</feature>
<feature type="helix" evidence="5">
    <location>
        <begin position="284"/>
        <end position="302"/>
    </location>
</feature>
<feature type="turn" evidence="5">
    <location>
        <begin position="304"/>
        <end position="306"/>
    </location>
</feature>
<feature type="helix" evidence="5">
    <location>
        <begin position="308"/>
        <end position="315"/>
    </location>
</feature>
<feature type="helix" evidence="5">
    <location>
        <begin position="317"/>
        <end position="323"/>
    </location>
</feature>
<feature type="strand" evidence="6">
    <location>
        <begin position="326"/>
        <end position="328"/>
    </location>
</feature>
<feature type="strand" evidence="4">
    <location>
        <begin position="337"/>
        <end position="339"/>
    </location>
</feature>
<feature type="turn" evidence="5">
    <location>
        <begin position="342"/>
        <end position="345"/>
    </location>
</feature>
<feature type="helix" evidence="5">
    <location>
        <begin position="348"/>
        <end position="365"/>
    </location>
</feature>
<feature type="helix" evidence="5">
    <location>
        <begin position="367"/>
        <end position="381"/>
    </location>
</feature>
<feature type="strand" evidence="5">
    <location>
        <begin position="384"/>
        <end position="386"/>
    </location>
</feature>
<feature type="helix" evidence="5">
    <location>
        <begin position="388"/>
        <end position="399"/>
    </location>
</feature>
<feature type="helix" evidence="5">
    <location>
        <begin position="403"/>
        <end position="412"/>
    </location>
</feature>
<feature type="strand" evidence="6">
    <location>
        <begin position="413"/>
        <end position="415"/>
    </location>
</feature>
<feature type="strand" evidence="5">
    <location>
        <begin position="417"/>
        <end position="434"/>
    </location>
</feature>
<feature type="strand" evidence="4">
    <location>
        <begin position="440"/>
        <end position="442"/>
    </location>
</feature>
<feature type="strand" evidence="5">
    <location>
        <begin position="447"/>
        <end position="453"/>
    </location>
</feature>
<feature type="strand" evidence="5">
    <location>
        <begin position="456"/>
        <end position="462"/>
    </location>
</feature>
<feature type="strand" evidence="5">
    <location>
        <begin position="464"/>
        <end position="469"/>
    </location>
</feature>
<feature type="strand" evidence="5">
    <location>
        <begin position="473"/>
        <end position="477"/>
    </location>
</feature>
<feature type="helix" evidence="5">
    <location>
        <begin position="478"/>
        <end position="480"/>
    </location>
</feature>
<feature type="strand" evidence="5">
    <location>
        <begin position="482"/>
        <end position="487"/>
    </location>
</feature>
<feature type="helix" evidence="5">
    <location>
        <begin position="490"/>
        <end position="498"/>
    </location>
</feature>
<feature type="helix" evidence="5">
    <location>
        <begin position="499"/>
        <end position="502"/>
    </location>
</feature>
<feature type="helix" evidence="5">
    <location>
        <begin position="505"/>
        <end position="521"/>
    </location>
</feature>
<feature type="strand" evidence="5">
    <location>
        <begin position="522"/>
        <end position="524"/>
    </location>
</feature>
<feature type="helix" evidence="5">
    <location>
        <begin position="526"/>
        <end position="533"/>
    </location>
</feature>
<feature type="helix" evidence="5">
    <location>
        <begin position="534"/>
        <end position="536"/>
    </location>
</feature>
<feature type="helix" evidence="5">
    <location>
        <begin position="542"/>
        <end position="556"/>
    </location>
</feature>
<feature type="helix" evidence="5">
    <location>
        <begin position="563"/>
        <end position="577"/>
    </location>
</feature>
<feature type="helix" evidence="5">
    <location>
        <begin position="583"/>
        <end position="599"/>
    </location>
</feature>
<feature type="helix" evidence="5">
    <location>
        <begin position="601"/>
        <end position="608"/>
    </location>
</feature>
<feature type="helix" evidence="5">
    <location>
        <begin position="609"/>
        <end position="616"/>
    </location>
</feature>
<feature type="helix" evidence="5">
    <location>
        <begin position="619"/>
        <end position="632"/>
    </location>
</feature>
<feature type="helix" evidence="5">
    <location>
        <begin position="636"/>
        <end position="644"/>
    </location>
</feature>
<feature type="helix" evidence="5">
    <location>
        <begin position="649"/>
        <end position="659"/>
    </location>
</feature>
<feature type="helix" evidence="5">
    <location>
        <begin position="665"/>
        <end position="676"/>
    </location>
</feature>
<feature type="helix" evidence="5">
    <location>
        <begin position="682"/>
        <end position="692"/>
    </location>
</feature>
<feature type="helix" evidence="5">
    <location>
        <begin position="696"/>
        <end position="704"/>
    </location>
</feature>
<feature type="helix" evidence="5">
    <location>
        <begin position="706"/>
        <end position="717"/>
    </location>
</feature>
<feature type="strand" evidence="5">
    <location>
        <begin position="719"/>
        <end position="721"/>
    </location>
</feature>
<feature type="helix" evidence="5">
    <location>
        <begin position="722"/>
        <end position="734"/>
    </location>
</feature>
<feature type="turn" evidence="5">
    <location>
        <begin position="735"/>
        <end position="737"/>
    </location>
</feature>
<feature type="helix" evidence="5">
    <location>
        <begin position="741"/>
        <end position="746"/>
    </location>
</feature>
<feature type="helix" evidence="5">
    <location>
        <begin position="754"/>
        <end position="775"/>
    </location>
</feature>
<feature type="turn" evidence="5">
    <location>
        <begin position="776"/>
        <end position="779"/>
    </location>
</feature>
<keyword id="KW-0002">3D-structure</keyword>
<keyword id="KW-0031">Aminopeptidase</keyword>
<keyword id="KW-0963">Cytoplasm</keyword>
<keyword id="KW-0378">Hydrolase</keyword>
<keyword id="KW-0479">Metal-binding</keyword>
<keyword id="KW-0482">Metalloprotease</keyword>
<keyword id="KW-0645">Protease</keyword>
<keyword id="KW-1185">Reference proteome</keyword>
<keyword id="KW-0862">Zinc</keyword>
<dbReference type="EC" id="3.4.11.-"/>
<dbReference type="EMBL" id="AF081952">
    <property type="protein sequence ID" value="AAC98290.1"/>
    <property type="molecule type" value="Genomic_DNA"/>
</dbReference>
<dbReference type="EMBL" id="AL445065">
    <property type="protein sequence ID" value="CAC11944.1"/>
    <property type="molecule type" value="Genomic_DNA"/>
</dbReference>
<dbReference type="PIR" id="T37456">
    <property type="entry name" value="T37456"/>
</dbReference>
<dbReference type="RefSeq" id="WP_010901227.1">
    <property type="nucleotide sequence ID" value="NC_002578.1"/>
</dbReference>
<dbReference type="PDB" id="1Z1W">
    <property type="method" value="X-ray"/>
    <property type="resolution" value="2.70 A"/>
    <property type="chains" value="A=1-780"/>
</dbReference>
<dbReference type="PDB" id="1Z5H">
    <property type="method" value="X-ray"/>
    <property type="resolution" value="2.30 A"/>
    <property type="chains" value="A/B=1-780"/>
</dbReference>
<dbReference type="PDB" id="3Q7J">
    <property type="method" value="X-ray"/>
    <property type="resolution" value="2.91 A"/>
    <property type="chains" value="A/B=1-780"/>
</dbReference>
<dbReference type="PDBsum" id="1Z1W"/>
<dbReference type="PDBsum" id="1Z5H"/>
<dbReference type="PDBsum" id="3Q7J"/>
<dbReference type="SMR" id="O93655"/>
<dbReference type="FunCoup" id="O93655">
    <property type="interactions" value="101"/>
</dbReference>
<dbReference type="STRING" id="273075.gene:9572029"/>
<dbReference type="MEROPS" id="M01.021"/>
<dbReference type="PaxDb" id="273075-Ta0815"/>
<dbReference type="EnsemblBacteria" id="CAC11944">
    <property type="protein sequence ID" value="CAC11944"/>
    <property type="gene ID" value="CAC11944"/>
</dbReference>
<dbReference type="KEGG" id="tac:Ta0815"/>
<dbReference type="eggNOG" id="arCOG02969">
    <property type="taxonomic scope" value="Archaea"/>
</dbReference>
<dbReference type="HOGENOM" id="CLU_003705_0_1_2"/>
<dbReference type="InParanoid" id="O93655"/>
<dbReference type="OrthoDB" id="139771at2157"/>
<dbReference type="BRENDA" id="3.4.11.7">
    <property type="organism ID" value="6324"/>
</dbReference>
<dbReference type="EvolutionaryTrace" id="O93655"/>
<dbReference type="PRO" id="PR:O93655"/>
<dbReference type="Proteomes" id="UP000001024">
    <property type="component" value="Chromosome"/>
</dbReference>
<dbReference type="GO" id="GO:0005737">
    <property type="term" value="C:cytoplasm"/>
    <property type="evidence" value="ECO:0007669"/>
    <property type="project" value="UniProtKB-SubCell"/>
</dbReference>
<dbReference type="GO" id="GO:0005615">
    <property type="term" value="C:extracellular space"/>
    <property type="evidence" value="ECO:0007669"/>
    <property type="project" value="TreeGrafter"/>
</dbReference>
<dbReference type="GO" id="GO:0016020">
    <property type="term" value="C:membrane"/>
    <property type="evidence" value="ECO:0007669"/>
    <property type="project" value="TreeGrafter"/>
</dbReference>
<dbReference type="GO" id="GO:0070006">
    <property type="term" value="F:metalloaminopeptidase activity"/>
    <property type="evidence" value="ECO:0007669"/>
    <property type="project" value="TreeGrafter"/>
</dbReference>
<dbReference type="GO" id="GO:0042277">
    <property type="term" value="F:peptide binding"/>
    <property type="evidence" value="ECO:0007669"/>
    <property type="project" value="TreeGrafter"/>
</dbReference>
<dbReference type="GO" id="GO:0008270">
    <property type="term" value="F:zinc ion binding"/>
    <property type="evidence" value="ECO:0007669"/>
    <property type="project" value="InterPro"/>
</dbReference>
<dbReference type="GO" id="GO:0043171">
    <property type="term" value="P:peptide catabolic process"/>
    <property type="evidence" value="ECO:0007669"/>
    <property type="project" value="TreeGrafter"/>
</dbReference>
<dbReference type="GO" id="GO:0006508">
    <property type="term" value="P:proteolysis"/>
    <property type="evidence" value="ECO:0007669"/>
    <property type="project" value="UniProtKB-KW"/>
</dbReference>
<dbReference type="CDD" id="cd09601">
    <property type="entry name" value="M1_APN-Q_like"/>
    <property type="match status" value="1"/>
</dbReference>
<dbReference type="FunFam" id="1.10.390.10:FF:000006">
    <property type="entry name" value="Puromycin-sensitive aminopeptidase"/>
    <property type="match status" value="1"/>
</dbReference>
<dbReference type="Gene3D" id="1.25.50.20">
    <property type="match status" value="1"/>
</dbReference>
<dbReference type="Gene3D" id="2.60.40.1910">
    <property type="match status" value="1"/>
</dbReference>
<dbReference type="Gene3D" id="1.10.390.10">
    <property type="entry name" value="Neutral Protease Domain 2"/>
    <property type="match status" value="1"/>
</dbReference>
<dbReference type="Gene3D" id="2.60.40.1730">
    <property type="entry name" value="tricorn interacting facor f3 domain"/>
    <property type="match status" value="1"/>
</dbReference>
<dbReference type="InterPro" id="IPR045357">
    <property type="entry name" value="Aminopeptidase_N-like_N"/>
</dbReference>
<dbReference type="InterPro" id="IPR042097">
    <property type="entry name" value="Aminopeptidase_N-like_N_sf"/>
</dbReference>
<dbReference type="InterPro" id="IPR024571">
    <property type="entry name" value="ERAP1-like_C_dom"/>
</dbReference>
<dbReference type="InterPro" id="IPR034016">
    <property type="entry name" value="M1_APN-typ"/>
</dbReference>
<dbReference type="InterPro" id="IPR001930">
    <property type="entry name" value="Peptidase_M1"/>
</dbReference>
<dbReference type="InterPro" id="IPR050344">
    <property type="entry name" value="Peptidase_M1_aminopeptidases"/>
</dbReference>
<dbReference type="InterPro" id="IPR014782">
    <property type="entry name" value="Peptidase_M1_dom"/>
</dbReference>
<dbReference type="InterPro" id="IPR027268">
    <property type="entry name" value="Peptidase_M4/M1_CTD_sf"/>
</dbReference>
<dbReference type="PANTHER" id="PTHR11533">
    <property type="entry name" value="PROTEASE M1 ZINC METALLOPROTEASE"/>
    <property type="match status" value="1"/>
</dbReference>
<dbReference type="PANTHER" id="PTHR11533:SF174">
    <property type="entry name" value="PUROMYCIN-SENSITIVE AMINOPEPTIDASE-RELATED"/>
    <property type="match status" value="1"/>
</dbReference>
<dbReference type="Pfam" id="PF11838">
    <property type="entry name" value="ERAP1_C"/>
    <property type="match status" value="1"/>
</dbReference>
<dbReference type="Pfam" id="PF01433">
    <property type="entry name" value="Peptidase_M1"/>
    <property type="match status" value="1"/>
</dbReference>
<dbReference type="Pfam" id="PF17900">
    <property type="entry name" value="Peptidase_M1_N"/>
    <property type="match status" value="1"/>
</dbReference>
<dbReference type="PRINTS" id="PR00756">
    <property type="entry name" value="ALADIPTASE"/>
</dbReference>
<dbReference type="SUPFAM" id="SSF63737">
    <property type="entry name" value="Leukotriene A4 hydrolase N-terminal domain"/>
    <property type="match status" value="1"/>
</dbReference>
<dbReference type="SUPFAM" id="SSF55486">
    <property type="entry name" value="Metalloproteases ('zincins'), catalytic domain"/>
    <property type="match status" value="1"/>
</dbReference>
<dbReference type="PROSITE" id="PS00142">
    <property type="entry name" value="ZINC_PROTEASE"/>
    <property type="match status" value="1"/>
</dbReference>
<name>TRF3_THEAC</name>
<accession>O93655</accession>
<comment type="function">
    <text>Proteases F1, F2 and F3 degrade oligopeptides produced by Tricorn (themselves probably produced by the proteasome), yielding free amino acids.</text>
</comment>
<comment type="cofactor">
    <cofactor evidence="2">
        <name>Zn(2+)</name>
        <dbReference type="ChEBI" id="CHEBI:29105"/>
    </cofactor>
    <text evidence="2">Binds 1 zinc ion per subunit.</text>
</comment>
<comment type="subunit">
    <text evidence="2">Part of the tricorn proteolytic complex.</text>
</comment>
<comment type="subcellular location">
    <subcellularLocation>
        <location>Cytoplasm</location>
    </subcellularLocation>
</comment>
<comment type="similarity">
    <text evidence="3">Belongs to the peptidase M1 family.</text>
</comment>
<protein>
    <recommendedName>
        <fullName>Tricorn protease-interacting factor F3</fullName>
        <ecNumber>3.4.11.-</ecNumber>
    </recommendedName>
</protein>
<proteinExistence type="evidence at protein level"/>
<evidence type="ECO:0000250" key="1"/>
<evidence type="ECO:0000269" key="2">
    <source>
    </source>
</evidence>
<evidence type="ECO:0000305" key="3"/>
<evidence type="ECO:0007829" key="4">
    <source>
        <dbReference type="PDB" id="1Z1W"/>
    </source>
</evidence>
<evidence type="ECO:0007829" key="5">
    <source>
        <dbReference type="PDB" id="1Z5H"/>
    </source>
</evidence>
<evidence type="ECO:0007829" key="6">
    <source>
        <dbReference type="PDB" id="3Q7J"/>
    </source>
</evidence>
<reference key="1">
    <citation type="journal article" date="1998" name="Cell">
        <title>The role of tricorn protease and its aminopeptidase-interacting factors in cellular protein degradation.</title>
        <authorList>
            <person name="Tamura N."/>
            <person name="Lottspeich F."/>
            <person name="Baumeister W."/>
            <person name="Tamura T."/>
        </authorList>
    </citation>
    <scope>NUCLEOTIDE SEQUENCE [GENOMIC DNA]</scope>
    <source>
        <strain>ATCC 25905 / DSM 1728 / JCM 9062 / NBRC 15155 / AMRC-C165</strain>
    </source>
</reference>
<reference key="2">
    <citation type="journal article" date="2000" name="Nature">
        <title>The genome sequence of the thermoacidophilic scavenger Thermoplasma acidophilum.</title>
        <authorList>
            <person name="Ruepp A."/>
            <person name="Graml W."/>
            <person name="Santos-Martinez M.-L."/>
            <person name="Koretke K.K."/>
            <person name="Volker C."/>
            <person name="Mewes H.-W."/>
            <person name="Frishman D."/>
            <person name="Stocker S."/>
            <person name="Lupas A.N."/>
            <person name="Baumeister W."/>
        </authorList>
    </citation>
    <scope>NUCLEOTIDE SEQUENCE [LARGE SCALE GENOMIC DNA]</scope>
    <source>
        <strain>ATCC 25905 / DSM 1728 / JCM 9062 / NBRC 15155 / AMRC-C165</strain>
    </source>
</reference>
<reference key="3">
    <citation type="journal article" date="2005" name="J. Mol. Biol.">
        <title>Crystal structures of the tricorn interacting factor F3 from Thermoplasma acidophilum, a zinc aminopeptidase in three different conformations.</title>
        <authorList>
            <person name="Kyrieleis O.J."/>
            <person name="Goettig P."/>
            <person name="Kiefersauer R."/>
            <person name="Huber R."/>
            <person name="Brandstetter H."/>
        </authorList>
    </citation>
    <scope>X-RAY CRYSTALLOGRAPHY (2.3 ANGSTROMS) IN COMPLEX WITH ZINC IONS</scope>
    <scope>COFACTOR</scope>
</reference>
<organism>
    <name type="scientific">Thermoplasma acidophilum (strain ATCC 25905 / DSM 1728 / JCM 9062 / NBRC 15155 / AMRC-C165)</name>
    <dbReference type="NCBI Taxonomy" id="273075"/>
    <lineage>
        <taxon>Archaea</taxon>
        <taxon>Methanobacteriati</taxon>
        <taxon>Thermoplasmatota</taxon>
        <taxon>Thermoplasmata</taxon>
        <taxon>Thermoplasmatales</taxon>
        <taxon>Thermoplasmataceae</taxon>
        <taxon>Thermoplasma</taxon>
    </lineage>
</organism>
<sequence length="780" mass="89380">MEVEKYDLTLDFDIQKRTFNGTETITADAGDIVLDAVGLQINWMKVNGRDTAFTYDGQTVRAPGDSQPQKIEISFAGKVSDSLSGIYYAGRENGMITTHFEATDARRMFPCVDHPAYKAVFAITVVIDKDYDAISNMPPKRIEVSERKVVEFQDTPRMSTYLLYVGIGKFRYEYEKYRDIDLILASLKDIRSKYPLDMARKSVEFYENYFGIPYALPKMHLISVPEFGAGAMENWGAITFREIYMDIAENSAVTVKRNSANVIAHEIAHQWFGDLVTMKWWNDLWLNESFATFMSYKTMDTLFPEWSFWGDFFVSRTSGALRSDSLKNTHPIEVDVRDPDEISQIFDEISYGKGASILRMIEDYAGYEEFRKGISKYLNDHKFGNAEGSDLWTAIEDVSGKPVKRVMEYWIKNPGYPVIKLKRNGRKITMYQTRFLLNGEEEGRWPVPVNIKKKDGVERILLEDEASIEADGLIKINADSAGFYRVLYDDATFSDVMGHYRDLSPLDRIGLVDDLFAFLLSGHIDPETYRQRIRNFFDDEDHNVITAIVGQMEYLRMLTHAFDDDARAFCRSRMQFLTGKQDENLKIALGRVSRLYVMVDESYAEEMSKLFKDFDSAEPEMRSSIATAYALVTGDLKGLLEKFRSVDRDEDRVRIISAFGKLKSNTDLSTVYGMVEKTEIKKQDMISFFSSALETLPGREFIFANLDRIIRLVIRYFTGNRTASRTVEMMIPVIGLDHPDAEDIVRNIGSKNISMGLAKGIEMLAVNRKLVERIRQTAVK</sequence>